<dbReference type="EMBL" id="CP000413">
    <property type="protein sequence ID" value="ABJ59715.1"/>
    <property type="molecule type" value="Genomic_DNA"/>
</dbReference>
<dbReference type="RefSeq" id="WP_003647818.1">
    <property type="nucleotide sequence ID" value="NZ_WBMG01000001.1"/>
</dbReference>
<dbReference type="SMR" id="Q046A7"/>
<dbReference type="GeneID" id="29639135"/>
<dbReference type="KEGG" id="lga:LGAS_0309"/>
<dbReference type="HOGENOM" id="CLU_055188_4_2_9"/>
<dbReference type="BioCyc" id="LGAS324831:G1G6Y-308-MONOMER"/>
<dbReference type="Proteomes" id="UP000000664">
    <property type="component" value="Chromosome"/>
</dbReference>
<dbReference type="GO" id="GO:0022625">
    <property type="term" value="C:cytosolic large ribosomal subunit"/>
    <property type="evidence" value="ECO:0007669"/>
    <property type="project" value="TreeGrafter"/>
</dbReference>
<dbReference type="GO" id="GO:0019843">
    <property type="term" value="F:rRNA binding"/>
    <property type="evidence" value="ECO:0007669"/>
    <property type="project" value="UniProtKB-UniRule"/>
</dbReference>
<dbReference type="GO" id="GO:0003735">
    <property type="term" value="F:structural constituent of ribosome"/>
    <property type="evidence" value="ECO:0007669"/>
    <property type="project" value="InterPro"/>
</dbReference>
<dbReference type="GO" id="GO:0006412">
    <property type="term" value="P:translation"/>
    <property type="evidence" value="ECO:0007669"/>
    <property type="project" value="UniProtKB-UniRule"/>
</dbReference>
<dbReference type="Gene3D" id="3.100.10.10">
    <property type="match status" value="1"/>
</dbReference>
<dbReference type="HAMAP" id="MF_01341">
    <property type="entry name" value="Ribosomal_uL15"/>
    <property type="match status" value="1"/>
</dbReference>
<dbReference type="InterPro" id="IPR030878">
    <property type="entry name" value="Ribosomal_uL15"/>
</dbReference>
<dbReference type="InterPro" id="IPR021131">
    <property type="entry name" value="Ribosomal_uL15/eL18"/>
</dbReference>
<dbReference type="InterPro" id="IPR036227">
    <property type="entry name" value="Ribosomal_uL15/eL18_sf"/>
</dbReference>
<dbReference type="InterPro" id="IPR005749">
    <property type="entry name" value="Ribosomal_uL15_bac-type"/>
</dbReference>
<dbReference type="InterPro" id="IPR001196">
    <property type="entry name" value="Ribosomal_uL15_CS"/>
</dbReference>
<dbReference type="NCBIfam" id="TIGR01071">
    <property type="entry name" value="rplO_bact"/>
    <property type="match status" value="1"/>
</dbReference>
<dbReference type="PANTHER" id="PTHR12934">
    <property type="entry name" value="50S RIBOSOMAL PROTEIN L15"/>
    <property type="match status" value="1"/>
</dbReference>
<dbReference type="PANTHER" id="PTHR12934:SF11">
    <property type="entry name" value="LARGE RIBOSOMAL SUBUNIT PROTEIN UL15M"/>
    <property type="match status" value="1"/>
</dbReference>
<dbReference type="Pfam" id="PF00828">
    <property type="entry name" value="Ribosomal_L27A"/>
    <property type="match status" value="1"/>
</dbReference>
<dbReference type="SUPFAM" id="SSF52080">
    <property type="entry name" value="Ribosomal proteins L15p and L18e"/>
    <property type="match status" value="1"/>
</dbReference>
<dbReference type="PROSITE" id="PS00475">
    <property type="entry name" value="RIBOSOMAL_L15"/>
    <property type="match status" value="1"/>
</dbReference>
<protein>
    <recommendedName>
        <fullName evidence="1">Large ribosomal subunit protein uL15</fullName>
    </recommendedName>
    <alternativeName>
        <fullName evidence="3">50S ribosomal protein L15</fullName>
    </alternativeName>
</protein>
<feature type="chain" id="PRO_1000054480" description="Large ribosomal subunit protein uL15">
    <location>
        <begin position="1"/>
        <end position="146"/>
    </location>
</feature>
<feature type="region of interest" description="Disordered" evidence="2">
    <location>
        <begin position="1"/>
        <end position="54"/>
    </location>
</feature>
<feature type="compositionally biased region" description="Basic and acidic residues" evidence="2">
    <location>
        <begin position="1"/>
        <end position="13"/>
    </location>
</feature>
<feature type="compositionally biased region" description="Gly residues" evidence="2">
    <location>
        <begin position="23"/>
        <end position="35"/>
    </location>
</feature>
<name>RL15_LACGA</name>
<keyword id="KW-0687">Ribonucleoprotein</keyword>
<keyword id="KW-0689">Ribosomal protein</keyword>
<keyword id="KW-0694">RNA-binding</keyword>
<keyword id="KW-0699">rRNA-binding</keyword>
<gene>
    <name evidence="1" type="primary">rplO</name>
    <name type="ordered locus">LGAS_0309</name>
</gene>
<reference key="1">
    <citation type="journal article" date="2006" name="Proc. Natl. Acad. Sci. U.S.A.">
        <title>Comparative genomics of the lactic acid bacteria.</title>
        <authorList>
            <person name="Makarova K.S."/>
            <person name="Slesarev A."/>
            <person name="Wolf Y.I."/>
            <person name="Sorokin A."/>
            <person name="Mirkin B."/>
            <person name="Koonin E.V."/>
            <person name="Pavlov A."/>
            <person name="Pavlova N."/>
            <person name="Karamychev V."/>
            <person name="Polouchine N."/>
            <person name="Shakhova V."/>
            <person name="Grigoriev I."/>
            <person name="Lou Y."/>
            <person name="Rohksar D."/>
            <person name="Lucas S."/>
            <person name="Huang K."/>
            <person name="Goodstein D.M."/>
            <person name="Hawkins T."/>
            <person name="Plengvidhya V."/>
            <person name="Welker D."/>
            <person name="Hughes J."/>
            <person name="Goh Y."/>
            <person name="Benson A."/>
            <person name="Baldwin K."/>
            <person name="Lee J.-H."/>
            <person name="Diaz-Muniz I."/>
            <person name="Dosti B."/>
            <person name="Smeianov V."/>
            <person name="Wechter W."/>
            <person name="Barabote R."/>
            <person name="Lorca G."/>
            <person name="Altermann E."/>
            <person name="Barrangou R."/>
            <person name="Ganesan B."/>
            <person name="Xie Y."/>
            <person name="Rawsthorne H."/>
            <person name="Tamir D."/>
            <person name="Parker C."/>
            <person name="Breidt F."/>
            <person name="Broadbent J.R."/>
            <person name="Hutkins R."/>
            <person name="O'Sullivan D."/>
            <person name="Steele J."/>
            <person name="Unlu G."/>
            <person name="Saier M.H. Jr."/>
            <person name="Klaenhammer T."/>
            <person name="Richardson P."/>
            <person name="Kozyavkin S."/>
            <person name="Weimer B.C."/>
            <person name="Mills D.A."/>
        </authorList>
    </citation>
    <scope>NUCLEOTIDE SEQUENCE [LARGE SCALE GENOMIC DNA]</scope>
    <source>
        <strain>ATCC 33323 / DSM 20243 / BCRC 14619 / CIP 102991 / JCM 1131 / KCTC 3163 / NCIMB 11718 / NCTC 13722 / AM63</strain>
    </source>
</reference>
<organism>
    <name type="scientific">Lactobacillus gasseri (strain ATCC 33323 / DSM 20243 / BCRC 14619 / CIP 102991 / JCM 1131 / KCTC 3163 / NCIMB 11718 / NCTC 13722 / AM63)</name>
    <dbReference type="NCBI Taxonomy" id="324831"/>
    <lineage>
        <taxon>Bacteria</taxon>
        <taxon>Bacillati</taxon>
        <taxon>Bacillota</taxon>
        <taxon>Bacilli</taxon>
        <taxon>Lactobacillales</taxon>
        <taxon>Lactobacillaceae</taxon>
        <taxon>Lactobacillus</taxon>
    </lineage>
</organism>
<accession>Q046A7</accession>
<comment type="function">
    <text evidence="1">Binds to the 23S rRNA.</text>
</comment>
<comment type="subunit">
    <text evidence="1">Part of the 50S ribosomal subunit.</text>
</comment>
<comment type="similarity">
    <text evidence="1">Belongs to the universal ribosomal protein uL15 family.</text>
</comment>
<proteinExistence type="inferred from homology"/>
<sequence>MKLNELKPNEGSRRNRKRVGRGTSSGYGKTAGRGQKGQLARTGGKTRLGFEGGQMPLFRRMPKRGFKNVNRKEYAIINLNDLNRFDDGSEVTIDTLKSSGLVKKELAGVKLLANGELKVKLTVKVNKVSEAAKKAVEAAGGTVEVI</sequence>
<evidence type="ECO:0000255" key="1">
    <source>
        <dbReference type="HAMAP-Rule" id="MF_01341"/>
    </source>
</evidence>
<evidence type="ECO:0000256" key="2">
    <source>
        <dbReference type="SAM" id="MobiDB-lite"/>
    </source>
</evidence>
<evidence type="ECO:0000305" key="3"/>